<name>Y1093_SHELP</name>
<proteinExistence type="inferred from homology"/>
<organism>
    <name type="scientific">Shewanella loihica (strain ATCC BAA-1088 / PV-4)</name>
    <dbReference type="NCBI Taxonomy" id="323850"/>
    <lineage>
        <taxon>Bacteria</taxon>
        <taxon>Pseudomonadati</taxon>
        <taxon>Pseudomonadota</taxon>
        <taxon>Gammaproteobacteria</taxon>
        <taxon>Alteromonadales</taxon>
        <taxon>Shewanellaceae</taxon>
        <taxon>Shewanella</taxon>
    </lineage>
</organism>
<gene>
    <name type="ordered locus">Shew_1093</name>
</gene>
<accession>A3QBW6</accession>
<keyword id="KW-1185">Reference proteome</keyword>
<comment type="similarity">
    <text evidence="1">Belongs to the UPF0246 family.</text>
</comment>
<reference key="1">
    <citation type="submission" date="2007-03" db="EMBL/GenBank/DDBJ databases">
        <title>Complete sequence of Shewanella loihica PV-4.</title>
        <authorList>
            <consortium name="US DOE Joint Genome Institute"/>
            <person name="Copeland A."/>
            <person name="Lucas S."/>
            <person name="Lapidus A."/>
            <person name="Barry K."/>
            <person name="Detter J.C."/>
            <person name="Glavina del Rio T."/>
            <person name="Hammon N."/>
            <person name="Israni S."/>
            <person name="Dalin E."/>
            <person name="Tice H."/>
            <person name="Pitluck S."/>
            <person name="Chain P."/>
            <person name="Malfatti S."/>
            <person name="Shin M."/>
            <person name="Vergez L."/>
            <person name="Schmutz J."/>
            <person name="Larimer F."/>
            <person name="Land M."/>
            <person name="Hauser L."/>
            <person name="Kyrpides N."/>
            <person name="Mikhailova N."/>
            <person name="Romine M.F."/>
            <person name="Serres G."/>
            <person name="Fredrickson J."/>
            <person name="Tiedje J."/>
            <person name="Richardson P."/>
        </authorList>
    </citation>
    <scope>NUCLEOTIDE SEQUENCE [LARGE SCALE GENOMIC DNA]</scope>
    <source>
        <strain>ATCC BAA-1088 / PV-4</strain>
    </source>
</reference>
<dbReference type="EMBL" id="CP000606">
    <property type="protein sequence ID" value="ABO22964.1"/>
    <property type="molecule type" value="Genomic_DNA"/>
</dbReference>
<dbReference type="RefSeq" id="WP_011864897.1">
    <property type="nucleotide sequence ID" value="NC_009092.1"/>
</dbReference>
<dbReference type="SMR" id="A3QBW6"/>
<dbReference type="STRING" id="323850.Shew_1093"/>
<dbReference type="KEGG" id="slo:Shew_1093"/>
<dbReference type="eggNOG" id="COG3022">
    <property type="taxonomic scope" value="Bacteria"/>
</dbReference>
<dbReference type="HOGENOM" id="CLU_061989_0_0_6"/>
<dbReference type="OrthoDB" id="9777133at2"/>
<dbReference type="Proteomes" id="UP000001558">
    <property type="component" value="Chromosome"/>
</dbReference>
<dbReference type="GO" id="GO:0005829">
    <property type="term" value="C:cytosol"/>
    <property type="evidence" value="ECO:0007669"/>
    <property type="project" value="TreeGrafter"/>
</dbReference>
<dbReference type="GO" id="GO:0033194">
    <property type="term" value="P:response to hydroperoxide"/>
    <property type="evidence" value="ECO:0007669"/>
    <property type="project" value="TreeGrafter"/>
</dbReference>
<dbReference type="HAMAP" id="MF_00652">
    <property type="entry name" value="UPF0246"/>
    <property type="match status" value="1"/>
</dbReference>
<dbReference type="InterPro" id="IPR005583">
    <property type="entry name" value="YaaA"/>
</dbReference>
<dbReference type="NCBIfam" id="NF002541">
    <property type="entry name" value="PRK02101.1-1"/>
    <property type="match status" value="1"/>
</dbReference>
<dbReference type="NCBIfam" id="NF002542">
    <property type="entry name" value="PRK02101.1-3"/>
    <property type="match status" value="1"/>
</dbReference>
<dbReference type="PANTHER" id="PTHR30283:SF4">
    <property type="entry name" value="PEROXIDE STRESS RESISTANCE PROTEIN YAAA"/>
    <property type="match status" value="1"/>
</dbReference>
<dbReference type="PANTHER" id="PTHR30283">
    <property type="entry name" value="PEROXIDE STRESS RESPONSE PROTEIN YAAA"/>
    <property type="match status" value="1"/>
</dbReference>
<dbReference type="Pfam" id="PF03883">
    <property type="entry name" value="H2O2_YaaD"/>
    <property type="match status" value="1"/>
</dbReference>
<protein>
    <recommendedName>
        <fullName evidence="1">UPF0246 protein Shew_1093</fullName>
    </recommendedName>
</protein>
<feature type="chain" id="PRO_1000061635" description="UPF0246 protein Shew_1093">
    <location>
        <begin position="1"/>
        <end position="258"/>
    </location>
</feature>
<evidence type="ECO:0000255" key="1">
    <source>
        <dbReference type="HAMAP-Rule" id="MF_00652"/>
    </source>
</evidence>
<sequence length="258" mass="29114">MLILVSPAKTLDYETPASTQTFTMPALLEHSEALIKVCRELTPADIASLMKVSDKIAGLNAARFAEWHRDFNLDNAKQALFAFRGDVYTGLDADTLSEGSLARAQQHLRILSGLYGLLRPLDLMQAYRLEMGTKLANDRGANLYQFWGDIVTQEVNKALAEQGDDILVNLASNEYFKSVKPKQIQGQVITPIFKDKKNGQYKVISFFAKKARGMMVRYMLDNKVSRYEELLKFDTAGYYYSEADSSVNEPVFLREEQA</sequence>